<dbReference type="EC" id="2.1.1.173" evidence="1"/>
<dbReference type="EC" id="2.1.1.264" evidence="1"/>
<dbReference type="EMBL" id="CP000749">
    <property type="protein sequence ID" value="ABR70665.1"/>
    <property type="molecule type" value="Genomic_DNA"/>
</dbReference>
<dbReference type="SMR" id="A6VW36"/>
<dbReference type="STRING" id="400668.Mmwyl1_1739"/>
<dbReference type="KEGG" id="mmw:Mmwyl1_1739"/>
<dbReference type="eggNOG" id="COG0116">
    <property type="taxonomic scope" value="Bacteria"/>
</dbReference>
<dbReference type="eggNOG" id="COG1092">
    <property type="taxonomic scope" value="Bacteria"/>
</dbReference>
<dbReference type="HOGENOM" id="CLU_014042_2_0_6"/>
<dbReference type="OrthoDB" id="9809404at2"/>
<dbReference type="GO" id="GO:0005737">
    <property type="term" value="C:cytoplasm"/>
    <property type="evidence" value="ECO:0007669"/>
    <property type="project" value="UniProtKB-SubCell"/>
</dbReference>
<dbReference type="GO" id="GO:0052915">
    <property type="term" value="F:23S rRNA (guanine(2445)-N(2))-methyltransferase activity"/>
    <property type="evidence" value="ECO:0007669"/>
    <property type="project" value="UniProtKB-UniRule"/>
</dbReference>
<dbReference type="GO" id="GO:0003723">
    <property type="term" value="F:RNA binding"/>
    <property type="evidence" value="ECO:0007669"/>
    <property type="project" value="UniProtKB-KW"/>
</dbReference>
<dbReference type="GO" id="GO:0070043">
    <property type="term" value="F:rRNA (guanine-N7-)-methyltransferase activity"/>
    <property type="evidence" value="ECO:0007669"/>
    <property type="project" value="UniProtKB-UniRule"/>
</dbReference>
<dbReference type="CDD" id="cd02440">
    <property type="entry name" value="AdoMet_MTases"/>
    <property type="match status" value="1"/>
</dbReference>
<dbReference type="CDD" id="cd11715">
    <property type="entry name" value="THUMP_AdoMetMT"/>
    <property type="match status" value="1"/>
</dbReference>
<dbReference type="Gene3D" id="3.30.2130.30">
    <property type="match status" value="1"/>
</dbReference>
<dbReference type="Gene3D" id="3.30.750.80">
    <property type="entry name" value="RNA methyltransferase domain (HRMD) like"/>
    <property type="match status" value="1"/>
</dbReference>
<dbReference type="Gene3D" id="3.40.50.150">
    <property type="entry name" value="Vaccinia Virus protein VP39"/>
    <property type="match status" value="2"/>
</dbReference>
<dbReference type="HAMAP" id="MF_01858">
    <property type="entry name" value="23SrRNA_methyltr_KL"/>
    <property type="match status" value="1"/>
</dbReference>
<dbReference type="InterPro" id="IPR017244">
    <property type="entry name" value="23SrRNA_methyltr_KL"/>
</dbReference>
<dbReference type="InterPro" id="IPR002052">
    <property type="entry name" value="DNA_methylase_N6_adenine_CS"/>
</dbReference>
<dbReference type="InterPro" id="IPR000241">
    <property type="entry name" value="RlmKL-like_Mtase"/>
</dbReference>
<dbReference type="InterPro" id="IPR054170">
    <property type="entry name" value="RlmL_1st"/>
</dbReference>
<dbReference type="InterPro" id="IPR019614">
    <property type="entry name" value="SAM-dep_methyl-trfase"/>
</dbReference>
<dbReference type="InterPro" id="IPR029063">
    <property type="entry name" value="SAM-dependent_MTases_sf"/>
</dbReference>
<dbReference type="InterPro" id="IPR004114">
    <property type="entry name" value="THUMP_dom"/>
</dbReference>
<dbReference type="NCBIfam" id="NF008748">
    <property type="entry name" value="PRK11783.1"/>
    <property type="match status" value="1"/>
</dbReference>
<dbReference type="PANTHER" id="PTHR47313">
    <property type="entry name" value="RIBOSOMAL RNA LARGE SUBUNIT METHYLTRANSFERASE K/L"/>
    <property type="match status" value="1"/>
</dbReference>
<dbReference type="PANTHER" id="PTHR47313:SF1">
    <property type="entry name" value="RIBOSOMAL RNA LARGE SUBUNIT METHYLTRANSFERASE K_L"/>
    <property type="match status" value="1"/>
</dbReference>
<dbReference type="Pfam" id="PF10672">
    <property type="entry name" value="Methyltrans_SAM"/>
    <property type="match status" value="1"/>
</dbReference>
<dbReference type="Pfam" id="PF22020">
    <property type="entry name" value="RlmL_1st"/>
    <property type="match status" value="1"/>
</dbReference>
<dbReference type="Pfam" id="PF02926">
    <property type="entry name" value="THUMP"/>
    <property type="match status" value="1"/>
</dbReference>
<dbReference type="Pfam" id="PF01170">
    <property type="entry name" value="UPF0020"/>
    <property type="match status" value="1"/>
</dbReference>
<dbReference type="PIRSF" id="PIRSF037618">
    <property type="entry name" value="RNA_Mtase_bacteria_prd"/>
    <property type="match status" value="1"/>
</dbReference>
<dbReference type="SMART" id="SM00981">
    <property type="entry name" value="THUMP"/>
    <property type="match status" value="1"/>
</dbReference>
<dbReference type="SUPFAM" id="SSF53335">
    <property type="entry name" value="S-adenosyl-L-methionine-dependent methyltransferases"/>
    <property type="match status" value="2"/>
</dbReference>
<dbReference type="PROSITE" id="PS51165">
    <property type="entry name" value="THUMP"/>
    <property type="match status" value="1"/>
</dbReference>
<accession>A6VW36</accession>
<sequence length="721" mass="82242">MSTILQTTDSASQVYALEITCPLGLENVLEKELHGEGLTQTRLGEAQVKLTTDLEGMYKACLWSRVATRVMLPIANFKMESADDLYDGVKAIQWSDHMNASNTIAIDCHGTNHHIRNTQFGAVRAKDAIADYFVALSGERPSVEKEQPEVRIALRIKREVVTVSIDLSGESMHRRGYRQQGGMAPLKENLAAGLLLRAGWGTDCGLTQLIDPMCGSGTFLVEAAMMSLDMAPGLRRPYWGFKGWKQHDHRMWQQLMDFAKNRKKDPATLGIRFQGTDREQKAIAAARENIKRAGLTDVIDVTMSSFQEHEFDINPDAPGLLITNPPYGERIGDEMALIALYRQLGEWVVTHVRGWQFMMLTSNDHLARQIPVRPEKSTRVINGGIECRAYQFPLLAGSIKEDVVAQSVMTPGAQMFANRLQKNAKKLKKWVEKNKIQCYRVYDADMPEYSVAIDIYGNWAHVQEYQAPKSIDPEKAKQRLFEVMSAIPTALNISESNVILKQRQRQTGKEQYEKFDQTKHEMIVEEYGCEFIVNLKDYLDTGLFLDHRPVRKLIQDKANGVRFLNLFCYTATASVHAGQGGARSSLSVDMSNTYTEWARRNIELNEFSDRYHQVERADCIEWLKQSRDKFDLIFMDPPTFSNSKKMADILDIQRDHGELVRLAMARLARGGELIFSNNYRRFVLDEALEQEYDVKNITRETLDPDFDRNDKIHQCYIIKNK</sequence>
<reference key="1">
    <citation type="submission" date="2007-06" db="EMBL/GenBank/DDBJ databases">
        <title>Complete sequence of Marinomonas sp. MWYL1.</title>
        <authorList>
            <consortium name="US DOE Joint Genome Institute"/>
            <person name="Copeland A."/>
            <person name="Lucas S."/>
            <person name="Lapidus A."/>
            <person name="Barry K."/>
            <person name="Glavina del Rio T."/>
            <person name="Dalin E."/>
            <person name="Tice H."/>
            <person name="Pitluck S."/>
            <person name="Kiss H."/>
            <person name="Brettin T."/>
            <person name="Bruce D."/>
            <person name="Detter J.C."/>
            <person name="Han C."/>
            <person name="Schmutz J."/>
            <person name="Larimer F."/>
            <person name="Land M."/>
            <person name="Hauser L."/>
            <person name="Kyrpides N."/>
            <person name="Kim E."/>
            <person name="Johnston A.W.B."/>
            <person name="Todd J.D."/>
            <person name="Rogers R."/>
            <person name="Wexler M."/>
            <person name="Bond P.L."/>
            <person name="Li Y."/>
            <person name="Richardson P."/>
        </authorList>
    </citation>
    <scope>NUCLEOTIDE SEQUENCE [LARGE SCALE GENOMIC DNA]</scope>
    <source>
        <strain>MWYL1</strain>
    </source>
</reference>
<proteinExistence type="inferred from homology"/>
<feature type="chain" id="PRO_0000366776" description="Ribosomal RNA large subunit methyltransferase K/L">
    <location>
        <begin position="1"/>
        <end position="721"/>
    </location>
</feature>
<feature type="domain" description="THUMP" evidence="1">
    <location>
        <begin position="56"/>
        <end position="167"/>
    </location>
</feature>
<comment type="function">
    <text evidence="1">Specifically methylates the guanine in position 2445 (m2G2445) and the guanine in position 2069 (m7G2069) of 23S rRNA.</text>
</comment>
<comment type="catalytic activity">
    <reaction evidence="1">
        <text>guanosine(2445) in 23S rRNA + S-adenosyl-L-methionine = N(2)-methylguanosine(2445) in 23S rRNA + S-adenosyl-L-homocysteine + H(+)</text>
        <dbReference type="Rhea" id="RHEA:42740"/>
        <dbReference type="Rhea" id="RHEA-COMP:10215"/>
        <dbReference type="Rhea" id="RHEA-COMP:10216"/>
        <dbReference type="ChEBI" id="CHEBI:15378"/>
        <dbReference type="ChEBI" id="CHEBI:57856"/>
        <dbReference type="ChEBI" id="CHEBI:59789"/>
        <dbReference type="ChEBI" id="CHEBI:74269"/>
        <dbReference type="ChEBI" id="CHEBI:74481"/>
        <dbReference type="EC" id="2.1.1.173"/>
    </reaction>
</comment>
<comment type="catalytic activity">
    <reaction evidence="1">
        <text>guanosine(2069) in 23S rRNA + S-adenosyl-L-methionine = N(2)-methylguanosine(2069) in 23S rRNA + S-adenosyl-L-homocysteine + H(+)</text>
        <dbReference type="Rhea" id="RHEA:43772"/>
        <dbReference type="Rhea" id="RHEA-COMP:10688"/>
        <dbReference type="Rhea" id="RHEA-COMP:10689"/>
        <dbReference type="ChEBI" id="CHEBI:15378"/>
        <dbReference type="ChEBI" id="CHEBI:57856"/>
        <dbReference type="ChEBI" id="CHEBI:59789"/>
        <dbReference type="ChEBI" id="CHEBI:74269"/>
        <dbReference type="ChEBI" id="CHEBI:74481"/>
        <dbReference type="EC" id="2.1.1.264"/>
    </reaction>
</comment>
<comment type="subcellular location">
    <subcellularLocation>
        <location evidence="1">Cytoplasm</location>
    </subcellularLocation>
</comment>
<comment type="similarity">
    <text evidence="1">Belongs to the methyltransferase superfamily. RlmKL family.</text>
</comment>
<name>RLMKL_MARMS</name>
<organism>
    <name type="scientific">Marinomonas sp. (strain MWYL1)</name>
    <dbReference type="NCBI Taxonomy" id="400668"/>
    <lineage>
        <taxon>Bacteria</taxon>
        <taxon>Pseudomonadati</taxon>
        <taxon>Pseudomonadota</taxon>
        <taxon>Gammaproteobacteria</taxon>
        <taxon>Oceanospirillales</taxon>
        <taxon>Oceanospirillaceae</taxon>
        <taxon>Marinomonas</taxon>
    </lineage>
</organism>
<keyword id="KW-0963">Cytoplasm</keyword>
<keyword id="KW-0489">Methyltransferase</keyword>
<keyword id="KW-0694">RNA-binding</keyword>
<keyword id="KW-0698">rRNA processing</keyword>
<keyword id="KW-0949">S-adenosyl-L-methionine</keyword>
<keyword id="KW-0808">Transferase</keyword>
<gene>
    <name evidence="1" type="primary">rlmL</name>
    <name type="ordered locus">Mmwyl1_1739</name>
</gene>
<protein>
    <recommendedName>
        <fullName evidence="1">Ribosomal RNA large subunit methyltransferase K/L</fullName>
    </recommendedName>
    <domain>
        <recommendedName>
            <fullName evidence="1">23S rRNA m2G2445 methyltransferase</fullName>
            <ecNumber evidence="1">2.1.1.173</ecNumber>
        </recommendedName>
        <alternativeName>
            <fullName evidence="1">rRNA (guanine-N(2)-)-methyltransferase RlmL</fullName>
        </alternativeName>
    </domain>
    <domain>
        <recommendedName>
            <fullName evidence="1">23S rRNA m7G2069 methyltransferase</fullName>
            <ecNumber evidence="1">2.1.1.264</ecNumber>
        </recommendedName>
        <alternativeName>
            <fullName evidence="1">rRNA (guanine-N(7)-)-methyltransferase RlmK</fullName>
        </alternativeName>
    </domain>
</protein>
<evidence type="ECO:0000255" key="1">
    <source>
        <dbReference type="HAMAP-Rule" id="MF_01858"/>
    </source>
</evidence>